<comment type="function">
    <text evidence="1">Part of the outer membrane protein assembly complex, which is involved in assembly and insertion of beta-barrel proteins into the outer membrane.</text>
</comment>
<comment type="subunit">
    <text evidence="1">Part of the Bam complex.</text>
</comment>
<comment type="subcellular location">
    <subcellularLocation>
        <location evidence="1">Cell outer membrane</location>
        <topology evidence="1">Lipid-anchor</topology>
    </subcellularLocation>
</comment>
<comment type="similarity">
    <text evidence="1">Belongs to the BamC family.</text>
</comment>
<name>BAMC_FERBD</name>
<reference key="1">
    <citation type="journal article" date="2010" name="Stand. Genomic Sci.">
        <title>Complete genome sequence of Ferrimonas balearica type strain (PAT).</title>
        <authorList>
            <person name="Nolan M."/>
            <person name="Sikorski J."/>
            <person name="Davenport K."/>
            <person name="Lucas S."/>
            <person name="Del Rio T.G."/>
            <person name="Tice H."/>
            <person name="Cheng J.F."/>
            <person name="Goodwin L."/>
            <person name="Pitluck S."/>
            <person name="Liolios K."/>
            <person name="Ivanova N."/>
            <person name="Mavromatis K."/>
            <person name="Ovchinnikova G."/>
            <person name="Pati A."/>
            <person name="Chen A."/>
            <person name="Palaniappan K."/>
            <person name="Land M."/>
            <person name="Hauser L."/>
            <person name="Chang Y.J."/>
            <person name="Jeffries C.D."/>
            <person name="Tapia R."/>
            <person name="Brettin T."/>
            <person name="Detter J.C."/>
            <person name="Han C."/>
            <person name="Yasawong M."/>
            <person name="Rohde M."/>
            <person name="Tindall B.J."/>
            <person name="Goker M."/>
            <person name="Woyke T."/>
            <person name="Bristow J."/>
            <person name="Eisen J.A."/>
            <person name="Markowitz V."/>
            <person name="Hugenholtz P."/>
            <person name="Kyrpides N.C."/>
            <person name="Klenk H.P."/>
            <person name="Lapidus A."/>
        </authorList>
    </citation>
    <scope>NUCLEOTIDE SEQUENCE [LARGE SCALE GENOMIC DNA]</scope>
    <source>
        <strain>DSM 9799 / CCM 4581 / KCTC 23876 / PAT</strain>
    </source>
</reference>
<organism>
    <name type="scientific">Ferrimonas balearica (strain DSM 9799 / CCM 4581 / KCTC 23876 / PAT)</name>
    <dbReference type="NCBI Taxonomy" id="550540"/>
    <lineage>
        <taxon>Bacteria</taxon>
        <taxon>Pseudomonadati</taxon>
        <taxon>Pseudomonadota</taxon>
        <taxon>Gammaproteobacteria</taxon>
        <taxon>Alteromonadales</taxon>
        <taxon>Ferrimonadaceae</taxon>
        <taxon>Ferrimonas</taxon>
    </lineage>
</organism>
<proteinExistence type="inferred from homology"/>
<feature type="signal peptide" evidence="1">
    <location>
        <begin position="1"/>
        <end position="19"/>
    </location>
</feature>
<feature type="chain" id="PRO_5000639712" description="Outer membrane protein assembly factor BamC">
    <location>
        <begin position="20"/>
        <end position="365"/>
    </location>
</feature>
<feature type="lipid moiety-binding region" description="N-palmitoyl cysteine" evidence="1">
    <location>
        <position position="20"/>
    </location>
</feature>
<feature type="lipid moiety-binding region" description="S-diacylglycerol cysteine" evidence="1">
    <location>
        <position position="20"/>
    </location>
</feature>
<keyword id="KW-0998">Cell outer membrane</keyword>
<keyword id="KW-0449">Lipoprotein</keyword>
<keyword id="KW-0472">Membrane</keyword>
<keyword id="KW-0564">Palmitate</keyword>
<keyword id="KW-1185">Reference proteome</keyword>
<keyword id="KW-0732">Signal</keyword>
<evidence type="ECO:0000255" key="1">
    <source>
        <dbReference type="HAMAP-Rule" id="MF_00924"/>
    </source>
</evidence>
<accession>E1SLW4</accession>
<sequence>MKHNRLAIAALAPVLILVGCSTPLERRQASGGFDYLEQPAPTPLVVPAGLDAPRLSREFDIPKLGDNAERDVVGPRLDVRPPLQVLPLAPGTRIQDGVDSITVLVESNQDDIDLAQEIHDTLLKFLDDKSINVARDDSGVIVTDWIENEEVIGKSWFRDKVYQIRQRYEFDTVVKDHGRSGSITIELVDHEEGLDGVDDSIVLTDADRRRYAIDMLNNAIAYMNFERQQRQATQELLNGRGIKTELGFDSDENTAFVAEASFDQVWRRMDKVLPLLGFQVRDLDQQLATYFVDYEPDGGFWASLWGDNDELPLEEGPYQIRLEPMGERTAITLMDNEANPLPTETVTQMYNRFAELLQKESRDLQ</sequence>
<gene>
    <name evidence="1" type="primary">bamC</name>
    <name type="ordered locus">Fbal_1290</name>
</gene>
<dbReference type="EMBL" id="CP002209">
    <property type="protein sequence ID" value="ADN75496.1"/>
    <property type="molecule type" value="Genomic_DNA"/>
</dbReference>
<dbReference type="RefSeq" id="WP_013344802.1">
    <property type="nucleotide sequence ID" value="NC_014541.1"/>
</dbReference>
<dbReference type="SMR" id="E1SLW4"/>
<dbReference type="STRING" id="550540.Fbal_1290"/>
<dbReference type="GeneID" id="67181514"/>
<dbReference type="KEGG" id="fbl:Fbal_1290"/>
<dbReference type="eggNOG" id="COG3317">
    <property type="taxonomic scope" value="Bacteria"/>
</dbReference>
<dbReference type="HOGENOM" id="CLU_063217_0_0_6"/>
<dbReference type="OrthoDB" id="5598420at2"/>
<dbReference type="Proteomes" id="UP000006683">
    <property type="component" value="Chromosome"/>
</dbReference>
<dbReference type="GO" id="GO:0009279">
    <property type="term" value="C:cell outer membrane"/>
    <property type="evidence" value="ECO:0007669"/>
    <property type="project" value="UniProtKB-SubCell"/>
</dbReference>
<dbReference type="GO" id="GO:0043165">
    <property type="term" value="P:Gram-negative-bacterium-type cell outer membrane assembly"/>
    <property type="evidence" value="ECO:0007669"/>
    <property type="project" value="UniProtKB-UniRule"/>
</dbReference>
<dbReference type="GO" id="GO:0051205">
    <property type="term" value="P:protein insertion into membrane"/>
    <property type="evidence" value="ECO:0007669"/>
    <property type="project" value="UniProtKB-UniRule"/>
</dbReference>
<dbReference type="Gene3D" id="3.30.530.50">
    <property type="match status" value="1"/>
</dbReference>
<dbReference type="Gene3D" id="3.30.310.170">
    <property type="entry name" value="Outer membrane protein assembly factor BamC"/>
    <property type="match status" value="1"/>
</dbReference>
<dbReference type="HAMAP" id="MF_00924">
    <property type="entry name" value="OM_assembly_BamC"/>
    <property type="match status" value="1"/>
</dbReference>
<dbReference type="InterPro" id="IPR014524">
    <property type="entry name" value="BamC"/>
</dbReference>
<dbReference type="InterPro" id="IPR042268">
    <property type="entry name" value="BamC_C"/>
</dbReference>
<dbReference type="InterPro" id="IPR010653">
    <property type="entry name" value="NlpB/DapX"/>
</dbReference>
<dbReference type="Pfam" id="PF06804">
    <property type="entry name" value="Lipoprotein_18"/>
    <property type="match status" value="1"/>
</dbReference>
<dbReference type="PROSITE" id="PS51257">
    <property type="entry name" value="PROKAR_LIPOPROTEIN"/>
    <property type="match status" value="1"/>
</dbReference>
<protein>
    <recommendedName>
        <fullName evidence="1">Outer membrane protein assembly factor BamC</fullName>
    </recommendedName>
</protein>